<keyword id="KW-0963">Cytoplasm</keyword>
<keyword id="KW-0342">GTP-binding</keyword>
<keyword id="KW-0436">Ligase</keyword>
<keyword id="KW-0460">Magnesium</keyword>
<keyword id="KW-0479">Metal-binding</keyword>
<keyword id="KW-0547">Nucleotide-binding</keyword>
<keyword id="KW-0658">Purine biosynthesis</keyword>
<keyword id="KW-1185">Reference proteome</keyword>
<reference key="1">
    <citation type="journal article" date="2004" name="Science">
        <title>The genomic sequence of the accidental pathogen Legionella pneumophila.</title>
        <authorList>
            <person name="Chien M."/>
            <person name="Morozova I."/>
            <person name="Shi S."/>
            <person name="Sheng H."/>
            <person name="Chen J."/>
            <person name="Gomez S.M."/>
            <person name="Asamani G."/>
            <person name="Hill K."/>
            <person name="Nuara J."/>
            <person name="Feder M."/>
            <person name="Rineer J."/>
            <person name="Greenberg J.J."/>
            <person name="Steshenko V."/>
            <person name="Park S.H."/>
            <person name="Zhao B."/>
            <person name="Teplitskaya E."/>
            <person name="Edwards J.R."/>
            <person name="Pampou S."/>
            <person name="Georghiou A."/>
            <person name="Chou I.-C."/>
            <person name="Iannuccilli W."/>
            <person name="Ulz M.E."/>
            <person name="Kim D.H."/>
            <person name="Geringer-Sameth A."/>
            <person name="Goldsberry C."/>
            <person name="Morozov P."/>
            <person name="Fischer S.G."/>
            <person name="Segal G."/>
            <person name="Qu X."/>
            <person name="Rzhetsky A."/>
            <person name="Zhang P."/>
            <person name="Cayanis E."/>
            <person name="De Jong P.J."/>
            <person name="Ju J."/>
            <person name="Kalachikov S."/>
            <person name="Shuman H.A."/>
            <person name="Russo J.J."/>
        </authorList>
    </citation>
    <scope>NUCLEOTIDE SEQUENCE [LARGE SCALE GENOMIC DNA]</scope>
    <source>
        <strain>Philadelphia 1 / ATCC 33152 / DSM 7513</strain>
    </source>
</reference>
<organism>
    <name type="scientific">Legionella pneumophila subsp. pneumophila (strain Philadelphia 1 / ATCC 33152 / DSM 7513)</name>
    <dbReference type="NCBI Taxonomy" id="272624"/>
    <lineage>
        <taxon>Bacteria</taxon>
        <taxon>Pseudomonadati</taxon>
        <taxon>Pseudomonadota</taxon>
        <taxon>Gammaproteobacteria</taxon>
        <taxon>Legionellales</taxon>
        <taxon>Legionellaceae</taxon>
        <taxon>Legionella</taxon>
    </lineage>
</organism>
<evidence type="ECO:0000255" key="1">
    <source>
        <dbReference type="HAMAP-Rule" id="MF_00011"/>
    </source>
</evidence>
<protein>
    <recommendedName>
        <fullName evidence="1">Adenylosuccinate synthetase</fullName>
        <shortName evidence="1">AMPSase</shortName>
        <shortName evidence="1">AdSS</shortName>
        <ecNumber evidence="1">6.3.4.4</ecNumber>
    </recommendedName>
    <alternativeName>
        <fullName evidence="1">IMP--aspartate ligase</fullName>
    </alternativeName>
</protein>
<accession>Q5ZY86</accession>
<comment type="function">
    <text evidence="1">Plays an important role in the de novo pathway of purine nucleotide biosynthesis. Catalyzes the first committed step in the biosynthesis of AMP from IMP.</text>
</comment>
<comment type="catalytic activity">
    <reaction evidence="1">
        <text>IMP + L-aspartate + GTP = N(6)-(1,2-dicarboxyethyl)-AMP + GDP + phosphate + 2 H(+)</text>
        <dbReference type="Rhea" id="RHEA:15753"/>
        <dbReference type="ChEBI" id="CHEBI:15378"/>
        <dbReference type="ChEBI" id="CHEBI:29991"/>
        <dbReference type="ChEBI" id="CHEBI:37565"/>
        <dbReference type="ChEBI" id="CHEBI:43474"/>
        <dbReference type="ChEBI" id="CHEBI:57567"/>
        <dbReference type="ChEBI" id="CHEBI:58053"/>
        <dbReference type="ChEBI" id="CHEBI:58189"/>
        <dbReference type="EC" id="6.3.4.4"/>
    </reaction>
</comment>
<comment type="cofactor">
    <cofactor evidence="1">
        <name>Mg(2+)</name>
        <dbReference type="ChEBI" id="CHEBI:18420"/>
    </cofactor>
    <text evidence="1">Binds 1 Mg(2+) ion per subunit.</text>
</comment>
<comment type="pathway">
    <text evidence="1">Purine metabolism; AMP biosynthesis via de novo pathway; AMP from IMP: step 1/2.</text>
</comment>
<comment type="subunit">
    <text evidence="1">Homodimer.</text>
</comment>
<comment type="subcellular location">
    <subcellularLocation>
        <location evidence="1">Cytoplasm</location>
    </subcellularLocation>
</comment>
<comment type="similarity">
    <text evidence="1">Belongs to the adenylosuccinate synthetase family.</text>
</comment>
<sequence length="431" mass="47381">MGKNVVVLGTQWGDEGKGKIVDLLTQDAQVVVRYQGGHNAGHTLKINGVKTVLRLIPSGMLRPNVTCYIANGVVLSPQALLSEIKELEGNGINVRERLRISLACPLILPYHIALDKARETHMGKSAIGTTGRGIGPAYEDKVARRALRVGDLFHRDRFANKLTELLDYHNFVLTQYFKQPAVDLESLLGESLQWAEELRPMVCDVSACLHEHRKQGENILFEGAQGVYLDIDHGTYPYVTSSNTCVGSVINGAGFGPRYIDYVLGITKAYTTRVGGGPFPTELLDDVGKRIAERGQEFGAVTGRPRRCGWFDAVLLKRSIELNSISGLCVTKLDVLDGLEVLRIAVAYKDRDGNILSRPPLAADDFNDLLPVYEELPGWQESTADVTVMSDLPANARAYLKRIEEILGIPIDMLSTGPERDSTITLRGPFL</sequence>
<proteinExistence type="inferred from homology"/>
<name>PURA_LEGPH</name>
<feature type="chain" id="PRO_0000224291" description="Adenylosuccinate synthetase">
    <location>
        <begin position="1"/>
        <end position="431"/>
    </location>
</feature>
<feature type="active site" description="Proton acceptor" evidence="1">
    <location>
        <position position="14"/>
    </location>
</feature>
<feature type="active site" description="Proton donor" evidence="1">
    <location>
        <position position="42"/>
    </location>
</feature>
<feature type="binding site" evidence="1">
    <location>
        <begin position="13"/>
        <end position="19"/>
    </location>
    <ligand>
        <name>GTP</name>
        <dbReference type="ChEBI" id="CHEBI:37565"/>
    </ligand>
</feature>
<feature type="binding site" description="in other chain" evidence="1">
    <location>
        <begin position="14"/>
        <end position="17"/>
    </location>
    <ligand>
        <name>IMP</name>
        <dbReference type="ChEBI" id="CHEBI:58053"/>
        <note>ligand shared between dimeric partners</note>
    </ligand>
</feature>
<feature type="binding site" evidence="1">
    <location>
        <position position="14"/>
    </location>
    <ligand>
        <name>Mg(2+)</name>
        <dbReference type="ChEBI" id="CHEBI:18420"/>
    </ligand>
</feature>
<feature type="binding site" description="in other chain" evidence="1">
    <location>
        <begin position="39"/>
        <end position="42"/>
    </location>
    <ligand>
        <name>IMP</name>
        <dbReference type="ChEBI" id="CHEBI:58053"/>
        <note>ligand shared between dimeric partners</note>
    </ligand>
</feature>
<feature type="binding site" evidence="1">
    <location>
        <begin position="41"/>
        <end position="43"/>
    </location>
    <ligand>
        <name>GTP</name>
        <dbReference type="ChEBI" id="CHEBI:37565"/>
    </ligand>
</feature>
<feature type="binding site" evidence="1">
    <location>
        <position position="41"/>
    </location>
    <ligand>
        <name>Mg(2+)</name>
        <dbReference type="ChEBI" id="CHEBI:18420"/>
    </ligand>
</feature>
<feature type="binding site" description="in other chain" evidence="1">
    <location>
        <position position="130"/>
    </location>
    <ligand>
        <name>IMP</name>
        <dbReference type="ChEBI" id="CHEBI:58053"/>
        <note>ligand shared between dimeric partners</note>
    </ligand>
</feature>
<feature type="binding site" evidence="1">
    <location>
        <position position="144"/>
    </location>
    <ligand>
        <name>IMP</name>
        <dbReference type="ChEBI" id="CHEBI:58053"/>
        <note>ligand shared between dimeric partners</note>
    </ligand>
</feature>
<feature type="binding site" description="in other chain" evidence="1">
    <location>
        <position position="225"/>
    </location>
    <ligand>
        <name>IMP</name>
        <dbReference type="ChEBI" id="CHEBI:58053"/>
        <note>ligand shared between dimeric partners</note>
    </ligand>
</feature>
<feature type="binding site" description="in other chain" evidence="1">
    <location>
        <position position="240"/>
    </location>
    <ligand>
        <name>IMP</name>
        <dbReference type="ChEBI" id="CHEBI:58053"/>
        <note>ligand shared between dimeric partners</note>
    </ligand>
</feature>
<feature type="binding site" evidence="1">
    <location>
        <begin position="300"/>
        <end position="306"/>
    </location>
    <ligand>
        <name>substrate</name>
    </ligand>
</feature>
<feature type="binding site" description="in other chain" evidence="1">
    <location>
        <position position="304"/>
    </location>
    <ligand>
        <name>IMP</name>
        <dbReference type="ChEBI" id="CHEBI:58053"/>
        <note>ligand shared between dimeric partners</note>
    </ligand>
</feature>
<feature type="binding site" evidence="1">
    <location>
        <position position="306"/>
    </location>
    <ligand>
        <name>GTP</name>
        <dbReference type="ChEBI" id="CHEBI:37565"/>
    </ligand>
</feature>
<feature type="binding site" evidence="1">
    <location>
        <begin position="332"/>
        <end position="334"/>
    </location>
    <ligand>
        <name>GTP</name>
        <dbReference type="ChEBI" id="CHEBI:37565"/>
    </ligand>
</feature>
<feature type="binding site" evidence="1">
    <location>
        <begin position="415"/>
        <end position="417"/>
    </location>
    <ligand>
        <name>GTP</name>
        <dbReference type="ChEBI" id="CHEBI:37565"/>
    </ligand>
</feature>
<gene>
    <name evidence="1" type="primary">purA</name>
    <name type="ordered locus">lpg0486</name>
</gene>
<dbReference type="EC" id="6.3.4.4" evidence="1"/>
<dbReference type="EMBL" id="AE017354">
    <property type="protein sequence ID" value="AAU26583.1"/>
    <property type="molecule type" value="Genomic_DNA"/>
</dbReference>
<dbReference type="RefSeq" id="WP_010946234.1">
    <property type="nucleotide sequence ID" value="NC_002942.5"/>
</dbReference>
<dbReference type="RefSeq" id="YP_094530.1">
    <property type="nucleotide sequence ID" value="NC_002942.5"/>
</dbReference>
<dbReference type="SMR" id="Q5ZY86"/>
<dbReference type="STRING" id="272624.lpg0486"/>
<dbReference type="PaxDb" id="272624-lpg0486"/>
<dbReference type="KEGG" id="lpn:lpg0486"/>
<dbReference type="PATRIC" id="fig|272624.6.peg.506"/>
<dbReference type="eggNOG" id="COG0104">
    <property type="taxonomic scope" value="Bacteria"/>
</dbReference>
<dbReference type="HOGENOM" id="CLU_029848_0_0_6"/>
<dbReference type="OrthoDB" id="9807553at2"/>
<dbReference type="UniPathway" id="UPA00075">
    <property type="reaction ID" value="UER00335"/>
</dbReference>
<dbReference type="Proteomes" id="UP000000609">
    <property type="component" value="Chromosome"/>
</dbReference>
<dbReference type="GO" id="GO:0005737">
    <property type="term" value="C:cytoplasm"/>
    <property type="evidence" value="ECO:0007669"/>
    <property type="project" value="UniProtKB-SubCell"/>
</dbReference>
<dbReference type="GO" id="GO:0004019">
    <property type="term" value="F:adenylosuccinate synthase activity"/>
    <property type="evidence" value="ECO:0007669"/>
    <property type="project" value="UniProtKB-UniRule"/>
</dbReference>
<dbReference type="GO" id="GO:0005525">
    <property type="term" value="F:GTP binding"/>
    <property type="evidence" value="ECO:0007669"/>
    <property type="project" value="UniProtKB-UniRule"/>
</dbReference>
<dbReference type="GO" id="GO:0000287">
    <property type="term" value="F:magnesium ion binding"/>
    <property type="evidence" value="ECO:0007669"/>
    <property type="project" value="UniProtKB-UniRule"/>
</dbReference>
<dbReference type="GO" id="GO:0044208">
    <property type="term" value="P:'de novo' AMP biosynthetic process"/>
    <property type="evidence" value="ECO:0007669"/>
    <property type="project" value="UniProtKB-UniRule"/>
</dbReference>
<dbReference type="GO" id="GO:0046040">
    <property type="term" value="P:IMP metabolic process"/>
    <property type="evidence" value="ECO:0007669"/>
    <property type="project" value="TreeGrafter"/>
</dbReference>
<dbReference type="CDD" id="cd03108">
    <property type="entry name" value="AdSS"/>
    <property type="match status" value="1"/>
</dbReference>
<dbReference type="FunFam" id="1.10.300.10:FF:000001">
    <property type="entry name" value="Adenylosuccinate synthetase"/>
    <property type="match status" value="1"/>
</dbReference>
<dbReference type="FunFam" id="3.90.170.10:FF:000001">
    <property type="entry name" value="Adenylosuccinate synthetase"/>
    <property type="match status" value="1"/>
</dbReference>
<dbReference type="Gene3D" id="3.40.440.10">
    <property type="entry name" value="Adenylosuccinate Synthetase, subunit A, domain 1"/>
    <property type="match status" value="1"/>
</dbReference>
<dbReference type="Gene3D" id="1.10.300.10">
    <property type="entry name" value="Adenylosuccinate Synthetase, subunit A, domain 2"/>
    <property type="match status" value="1"/>
</dbReference>
<dbReference type="Gene3D" id="3.90.170.10">
    <property type="entry name" value="Adenylosuccinate Synthetase, subunit A, domain 3"/>
    <property type="match status" value="1"/>
</dbReference>
<dbReference type="HAMAP" id="MF_00011">
    <property type="entry name" value="Adenylosucc_synth"/>
    <property type="match status" value="1"/>
</dbReference>
<dbReference type="InterPro" id="IPR018220">
    <property type="entry name" value="Adenylosuccin_syn_GTP-bd"/>
</dbReference>
<dbReference type="InterPro" id="IPR033128">
    <property type="entry name" value="Adenylosuccin_syn_Lys_AS"/>
</dbReference>
<dbReference type="InterPro" id="IPR042109">
    <property type="entry name" value="Adenylosuccinate_synth_dom1"/>
</dbReference>
<dbReference type="InterPro" id="IPR042110">
    <property type="entry name" value="Adenylosuccinate_synth_dom2"/>
</dbReference>
<dbReference type="InterPro" id="IPR042111">
    <property type="entry name" value="Adenylosuccinate_synth_dom3"/>
</dbReference>
<dbReference type="InterPro" id="IPR001114">
    <property type="entry name" value="Adenylosuccinate_synthetase"/>
</dbReference>
<dbReference type="InterPro" id="IPR027417">
    <property type="entry name" value="P-loop_NTPase"/>
</dbReference>
<dbReference type="NCBIfam" id="NF002223">
    <property type="entry name" value="PRK01117.1"/>
    <property type="match status" value="1"/>
</dbReference>
<dbReference type="NCBIfam" id="TIGR00184">
    <property type="entry name" value="purA"/>
    <property type="match status" value="1"/>
</dbReference>
<dbReference type="PANTHER" id="PTHR11846">
    <property type="entry name" value="ADENYLOSUCCINATE SYNTHETASE"/>
    <property type="match status" value="1"/>
</dbReference>
<dbReference type="PANTHER" id="PTHR11846:SF0">
    <property type="entry name" value="ADENYLOSUCCINATE SYNTHETASE"/>
    <property type="match status" value="1"/>
</dbReference>
<dbReference type="Pfam" id="PF00709">
    <property type="entry name" value="Adenylsucc_synt"/>
    <property type="match status" value="1"/>
</dbReference>
<dbReference type="SMART" id="SM00788">
    <property type="entry name" value="Adenylsucc_synt"/>
    <property type="match status" value="1"/>
</dbReference>
<dbReference type="SUPFAM" id="SSF52540">
    <property type="entry name" value="P-loop containing nucleoside triphosphate hydrolases"/>
    <property type="match status" value="1"/>
</dbReference>
<dbReference type="PROSITE" id="PS01266">
    <property type="entry name" value="ADENYLOSUCCIN_SYN_1"/>
    <property type="match status" value="1"/>
</dbReference>
<dbReference type="PROSITE" id="PS00513">
    <property type="entry name" value="ADENYLOSUCCIN_SYN_2"/>
    <property type="match status" value="1"/>
</dbReference>